<keyword id="KW-0025">Alternative splicing</keyword>
<keyword id="KW-1048">Host nucleus</keyword>
<keyword id="KW-0472">Membrane</keyword>
<keyword id="KW-0694">RNA-binding</keyword>
<keyword id="KW-0468">Viral matrix protein</keyword>
<keyword id="KW-0946">Virion</keyword>
<evidence type="ECO:0000255" key="1">
    <source>
        <dbReference type="HAMAP-Rule" id="MF_04068"/>
    </source>
</evidence>
<name>M1_I57A3</name>
<sequence>MSLLTEVETYVLSIVPSGPLKAEIAQRLEDVFAGKNTDLEALMEWLKTRPILSPLTKGILGFVFTLTVPSERGLQRRRFVQNALNGNGDPNNMDRAVKLYRKLKREITFHGAKEIALSYSAGALASCMGLIYNRMGAVTTEVAFGLVCATCEQIADSQHRSHRQMVITTNPLIRHENRMVLASTTAKAMEQMAGSSEQAAEAMEVASQARQMVQAMRAIGTHPSSSAGLKSDLLENLQAYQKRMGVQMQRFK</sequence>
<comment type="function">
    <text evidence="1">Plays critical roles in virus replication, from virus entry and uncoating to assembly and budding of the virus particle. M1 binding to ribonucleocapsids (RNPs) in nucleus seems to inhibit viral transcription. Interaction of viral NEP with M1-RNP is thought to promote nuclear export of the complex, which is targeted to the virion assembly site at the apical plasma membrane in polarized epithelial cells. Interactions with NA and HA may bring M1, a non-raft-associated protein, into lipid rafts. Forms a continuous shell on the inner side of the lipid bilayer in virion, where it binds the RNP. During virus entry into cell, the M2 ion channel acidifies the internal virion core, inducing M1 dissociation from the RNP. M1-free RNPs are transported to the nucleus, where viral transcription and replication can take place.</text>
</comment>
<comment type="function">
    <text evidence="1">Determines the virion's shape: spherical or filamentous. Clinical isolates of influenza are characterized by the presence of significant proportion of filamentous virions, whereas after multiple passage on eggs or cell culture, virions have only spherical morphology. Filamentous virions are thought to be important to infect neighboring cells, and spherical virions more suited to spread through aerosol between hosts organisms.</text>
</comment>
<comment type="subunit">
    <text evidence="1">Homodimer and homomultimer. Interacts with NEP. Binds ribonucleocapsid by both interacting with genomic RNA and NP protein. May interact with HA and NA. Cannot bind NP without genomic RNA.</text>
</comment>
<comment type="subcellular location">
    <subcellularLocation>
        <location evidence="1">Virion membrane</location>
        <topology evidence="1">Peripheral membrane protein</topology>
        <orientation evidence="1">Cytoplasmic side</orientation>
    </subcellularLocation>
    <subcellularLocation>
        <location evidence="1">Host nucleus</location>
    </subcellularLocation>
</comment>
<comment type="alternative products">
    <event type="alternative splicing"/>
    <isoform>
        <id>P67865-1</id>
        <id>P26128-1</id>
        <name>M1</name>
        <sequence type="displayed"/>
    </isoform>
    <isoform>
        <id>P67867-1</id>
        <id>P26130-1</id>
        <name>M2</name>
        <sequence type="external"/>
    </isoform>
    <text>Only the first 9 residues are shared by the 2 isoforms.</text>
</comment>
<comment type="miscellaneous">
    <text evidence="1">Most abundant protein in virion. When expressed alone can form virus-like particles in transfected cells.</text>
</comment>
<comment type="similarity">
    <text evidence="1">Belongs to the influenza viruses Matrix protein M1 family.</text>
</comment>
<protein>
    <recommendedName>
        <fullName evidence="1">Matrix protein 1</fullName>
        <shortName evidence="1">M1</shortName>
    </recommendedName>
</protein>
<proteinExistence type="inferred from homology"/>
<reference key="1">
    <citation type="journal article" date="1992" name="Virology">
        <title>Sequence changes in the live attenuated, cold-adapted variants of influenza A/Leningrad/134/57 (H2N2) virus.</title>
        <authorList>
            <person name="Klimov A.I."/>
            <person name="Cox N.J."/>
            <person name="Yotov W.V."/>
            <person name="Rocha E."/>
            <person name="Alexandrova G.I."/>
            <person name="Kendal A.P."/>
        </authorList>
    </citation>
    <scope>NUCLEOTIDE SEQUENCE</scope>
</reference>
<accession>P67865</accession>
<accession>P26128</accession>
<dbReference type="EMBL" id="M81582">
    <property type="protein sequence ID" value="AAA19197.1"/>
    <property type="molecule type" value="Unassigned_RNA"/>
</dbReference>
<dbReference type="SMR" id="P67865"/>
<dbReference type="GO" id="GO:0042025">
    <property type="term" value="C:host cell nucleus"/>
    <property type="evidence" value="ECO:0007669"/>
    <property type="project" value="UniProtKB-SubCell"/>
</dbReference>
<dbReference type="GO" id="GO:0016020">
    <property type="term" value="C:membrane"/>
    <property type="evidence" value="ECO:0007669"/>
    <property type="project" value="UniProtKB-KW"/>
</dbReference>
<dbReference type="GO" id="GO:0055036">
    <property type="term" value="C:virion membrane"/>
    <property type="evidence" value="ECO:0007669"/>
    <property type="project" value="UniProtKB-SubCell"/>
</dbReference>
<dbReference type="GO" id="GO:0003723">
    <property type="term" value="F:RNA binding"/>
    <property type="evidence" value="ECO:0007669"/>
    <property type="project" value="UniProtKB-UniRule"/>
</dbReference>
<dbReference type="GO" id="GO:0039660">
    <property type="term" value="F:structural constituent of virion"/>
    <property type="evidence" value="ECO:0007669"/>
    <property type="project" value="UniProtKB-UniRule"/>
</dbReference>
<dbReference type="GO" id="GO:0046761">
    <property type="term" value="P:viral budding from plasma membrane"/>
    <property type="evidence" value="ECO:0007669"/>
    <property type="project" value="UniProtKB-UniRule"/>
</dbReference>
<dbReference type="FunFam" id="1.10.10.180:FF:000001">
    <property type="entry name" value="Matrix protein 1"/>
    <property type="match status" value="1"/>
</dbReference>
<dbReference type="FunFam" id="1.20.91.10:FF:000001">
    <property type="entry name" value="Matrix protein 1"/>
    <property type="match status" value="1"/>
</dbReference>
<dbReference type="Gene3D" id="1.10.10.180">
    <property type="match status" value="1"/>
</dbReference>
<dbReference type="Gene3D" id="1.20.91.10">
    <property type="match status" value="1"/>
</dbReference>
<dbReference type="HAMAP" id="MF_04068">
    <property type="entry name" value="INFV_M1"/>
    <property type="match status" value="1"/>
</dbReference>
<dbReference type="InterPro" id="IPR036039">
    <property type="entry name" value="Flu_matrix_M1"/>
</dbReference>
<dbReference type="InterPro" id="IPR013188">
    <property type="entry name" value="Flu_matrix_M1_C"/>
</dbReference>
<dbReference type="InterPro" id="IPR001561">
    <property type="entry name" value="Flu_matrix_M1_N"/>
</dbReference>
<dbReference type="InterPro" id="IPR015423">
    <property type="entry name" value="Flu_matrix_M1_N_sub1"/>
</dbReference>
<dbReference type="InterPro" id="IPR015799">
    <property type="entry name" value="Flu_matrix_M1_N_sub2"/>
</dbReference>
<dbReference type="InterPro" id="IPR037533">
    <property type="entry name" value="INFV_M1"/>
</dbReference>
<dbReference type="Pfam" id="PF00598">
    <property type="entry name" value="Flu_M1"/>
    <property type="match status" value="1"/>
</dbReference>
<dbReference type="Pfam" id="PF08289">
    <property type="entry name" value="Flu_M1_C"/>
    <property type="match status" value="1"/>
</dbReference>
<dbReference type="SMART" id="SM00759">
    <property type="entry name" value="Flu_M1_C"/>
    <property type="match status" value="1"/>
</dbReference>
<dbReference type="SUPFAM" id="SSF48145">
    <property type="entry name" value="Influenza virus matrix protein M1"/>
    <property type="match status" value="1"/>
</dbReference>
<feature type="chain" id="PRO_0000078859" description="Matrix protein 1">
    <location>
        <begin position="1"/>
        <end position="252"/>
    </location>
</feature>
<feature type="region of interest" description="Membrane-binding" evidence="1">
    <location>
        <begin position="1"/>
        <end position="164"/>
    </location>
</feature>
<feature type="region of interest" description="RNP-binding" evidence="1">
    <location>
        <begin position="165"/>
        <end position="252"/>
    </location>
</feature>
<feature type="short sequence motif" description="Nuclear localization signal" evidence="1">
    <location>
        <begin position="101"/>
        <end position="105"/>
    </location>
</feature>
<gene>
    <name evidence="1" type="primary">M</name>
</gene>
<organism>
    <name type="scientific">Influenza A virus (strain A/Leningrad/134/47/1957 H2N2)</name>
    <dbReference type="NCBI Taxonomy" id="380983"/>
    <lineage>
        <taxon>Viruses</taxon>
        <taxon>Riboviria</taxon>
        <taxon>Orthornavirae</taxon>
        <taxon>Negarnaviricota</taxon>
        <taxon>Polyploviricotina</taxon>
        <taxon>Insthoviricetes</taxon>
        <taxon>Articulavirales</taxon>
        <taxon>Orthomyxoviridae</taxon>
        <taxon>Alphainfluenzavirus</taxon>
        <taxon>Alphainfluenzavirus influenzae</taxon>
        <taxon>Influenza A virus</taxon>
    </lineage>
</organism>
<organismHost>
    <name type="scientific">Aves</name>
    <dbReference type="NCBI Taxonomy" id="8782"/>
</organismHost>
<organismHost>
    <name type="scientific">Homo sapiens</name>
    <name type="common">Human</name>
    <dbReference type="NCBI Taxonomy" id="9606"/>
</organismHost>